<dbReference type="EC" id="3.6.1.-" evidence="1"/>
<dbReference type="EMBL" id="CP000247">
    <property type="protein sequence ID" value="ABG69759.1"/>
    <property type="molecule type" value="Genomic_DNA"/>
</dbReference>
<dbReference type="RefSeq" id="WP_000456725.1">
    <property type="nucleotide sequence ID" value="NC_008253.1"/>
</dbReference>
<dbReference type="SMR" id="Q0TH20"/>
<dbReference type="KEGG" id="ecp:ECP_1756"/>
<dbReference type="HOGENOM" id="CLU_040940_5_2_6"/>
<dbReference type="Proteomes" id="UP000009182">
    <property type="component" value="Chromosome"/>
</dbReference>
<dbReference type="GO" id="GO:0010945">
    <property type="term" value="F:coenzyme A diphosphatase activity"/>
    <property type="evidence" value="ECO:0007669"/>
    <property type="project" value="InterPro"/>
</dbReference>
<dbReference type="GO" id="GO:0000287">
    <property type="term" value="F:magnesium ion binding"/>
    <property type="evidence" value="ECO:0007669"/>
    <property type="project" value="UniProtKB-UniRule"/>
</dbReference>
<dbReference type="GO" id="GO:0030145">
    <property type="term" value="F:manganese ion binding"/>
    <property type="evidence" value="ECO:0007669"/>
    <property type="project" value="UniProtKB-UniRule"/>
</dbReference>
<dbReference type="GO" id="GO:0009132">
    <property type="term" value="P:nucleoside diphosphate metabolic process"/>
    <property type="evidence" value="ECO:0007669"/>
    <property type="project" value="InterPro"/>
</dbReference>
<dbReference type="CDD" id="cd03426">
    <property type="entry name" value="NUDIX_CoAse_Nudt7"/>
    <property type="match status" value="1"/>
</dbReference>
<dbReference type="FunFam" id="3.90.79.10:FF:000013">
    <property type="entry name" value="Uncharacterized Nudix hydrolase NudL"/>
    <property type="match status" value="1"/>
</dbReference>
<dbReference type="Gene3D" id="3.90.79.10">
    <property type="entry name" value="Nucleoside Triphosphate Pyrophosphohydrolase"/>
    <property type="match status" value="1"/>
</dbReference>
<dbReference type="HAMAP" id="MF_01592">
    <property type="entry name" value="Nudix_NudL"/>
    <property type="match status" value="1"/>
</dbReference>
<dbReference type="InterPro" id="IPR045121">
    <property type="entry name" value="CoAse"/>
</dbReference>
<dbReference type="InterPro" id="IPR015797">
    <property type="entry name" value="NUDIX_hydrolase-like_dom_sf"/>
</dbReference>
<dbReference type="InterPro" id="IPR000086">
    <property type="entry name" value="NUDIX_hydrolase_dom"/>
</dbReference>
<dbReference type="InterPro" id="IPR000059">
    <property type="entry name" value="NUDIX_hydrolase_NudL_CS"/>
</dbReference>
<dbReference type="InterPro" id="IPR023735">
    <property type="entry name" value="Nudix_NudL"/>
</dbReference>
<dbReference type="NCBIfam" id="NF007980">
    <property type="entry name" value="PRK10707.1"/>
    <property type="match status" value="1"/>
</dbReference>
<dbReference type="PANTHER" id="PTHR12992:SF11">
    <property type="entry name" value="MITOCHONDRIAL COENZYME A DIPHOSPHATASE NUDT8"/>
    <property type="match status" value="1"/>
</dbReference>
<dbReference type="PANTHER" id="PTHR12992">
    <property type="entry name" value="NUDIX HYDROLASE"/>
    <property type="match status" value="1"/>
</dbReference>
<dbReference type="Pfam" id="PF00293">
    <property type="entry name" value="NUDIX"/>
    <property type="match status" value="1"/>
</dbReference>
<dbReference type="SUPFAM" id="SSF55811">
    <property type="entry name" value="Nudix"/>
    <property type="match status" value="1"/>
</dbReference>
<dbReference type="PROSITE" id="PS51462">
    <property type="entry name" value="NUDIX"/>
    <property type="match status" value="1"/>
</dbReference>
<dbReference type="PROSITE" id="PS01293">
    <property type="entry name" value="NUDIX_COA"/>
    <property type="match status" value="1"/>
</dbReference>
<feature type="chain" id="PRO_0000315577" description="Uncharacterized Nudix hydrolase NudL">
    <location>
        <begin position="1"/>
        <end position="192"/>
    </location>
</feature>
<feature type="domain" description="Nudix hydrolase" evidence="1">
    <location>
        <begin position="29"/>
        <end position="160"/>
    </location>
</feature>
<feature type="short sequence motif" description="Nudix box">
    <location>
        <begin position="67"/>
        <end position="89"/>
    </location>
</feature>
<feature type="binding site" evidence="1">
    <location>
        <position position="83"/>
    </location>
    <ligand>
        <name>Mg(2+)</name>
        <dbReference type="ChEBI" id="CHEBI:18420"/>
    </ligand>
</feature>
<feature type="binding site" evidence="1">
    <location>
        <position position="87"/>
    </location>
    <ligand>
        <name>Mg(2+)</name>
        <dbReference type="ChEBI" id="CHEBI:18420"/>
    </ligand>
</feature>
<protein>
    <recommendedName>
        <fullName evidence="1">Uncharacterized Nudix hydrolase NudL</fullName>
        <ecNumber evidence="1">3.6.1.-</ecNumber>
    </recommendedName>
</protein>
<sequence length="192" mass="21464">MEYRSLTLDDFLSRFQLLRPQINRETLNHRQAAVLIPIVRRPQPGLLLTQRSIHLRKHAGQVAFPGGAVDDTDASVIAAALREAEEEVAIPPSAVEVIGVLPPVDSVTGYQVTPVVGIIPPDLPYRASEDEVSAVFEMPLAQALHLGRYHPLDIYRRGDSHRVWLSWYEQYFVWGMTAGIIRELALQIGVKP</sequence>
<comment type="function">
    <text evidence="1">Probably mediates the hydrolysis of some nucleoside diphosphate derivatives.</text>
</comment>
<comment type="cofactor">
    <cofactor evidence="1">
        <name>Mn(2+)</name>
        <dbReference type="ChEBI" id="CHEBI:29035"/>
    </cofactor>
    <cofactor evidence="1">
        <name>Mg(2+)</name>
        <dbReference type="ChEBI" id="CHEBI:18420"/>
    </cofactor>
</comment>
<comment type="similarity">
    <text evidence="1">Belongs to the Nudix hydrolase family. PCD1 subfamily.</text>
</comment>
<keyword id="KW-0378">Hydrolase</keyword>
<keyword id="KW-0460">Magnesium</keyword>
<keyword id="KW-0464">Manganese</keyword>
<keyword id="KW-0479">Metal-binding</keyword>
<reference key="1">
    <citation type="journal article" date="2006" name="Mol. Microbiol.">
        <title>Role of pathogenicity island-associated integrases in the genome plasticity of uropathogenic Escherichia coli strain 536.</title>
        <authorList>
            <person name="Hochhut B."/>
            <person name="Wilde C."/>
            <person name="Balling G."/>
            <person name="Middendorf B."/>
            <person name="Dobrindt U."/>
            <person name="Brzuszkiewicz E."/>
            <person name="Gottschalk G."/>
            <person name="Carniel E."/>
            <person name="Hacker J."/>
        </authorList>
    </citation>
    <scope>NUCLEOTIDE SEQUENCE [LARGE SCALE GENOMIC DNA]</scope>
    <source>
        <strain>536 / UPEC</strain>
    </source>
</reference>
<gene>
    <name evidence="1" type="primary">nudL</name>
    <name type="ordered locus">ECP_1756</name>
</gene>
<proteinExistence type="inferred from homology"/>
<organism>
    <name type="scientific">Escherichia coli O6:K15:H31 (strain 536 / UPEC)</name>
    <dbReference type="NCBI Taxonomy" id="362663"/>
    <lineage>
        <taxon>Bacteria</taxon>
        <taxon>Pseudomonadati</taxon>
        <taxon>Pseudomonadota</taxon>
        <taxon>Gammaproteobacteria</taxon>
        <taxon>Enterobacterales</taxon>
        <taxon>Enterobacteriaceae</taxon>
        <taxon>Escherichia</taxon>
    </lineage>
</organism>
<accession>Q0TH20</accession>
<name>NUDL_ECOL5</name>
<evidence type="ECO:0000255" key="1">
    <source>
        <dbReference type="HAMAP-Rule" id="MF_01592"/>
    </source>
</evidence>